<sequence length="98" mass="11186">MALTKAEMSEHLFEKLGLSKRDAKDLVELFFEEVRRALENGEQVKLSGFGNFDLRDKNQRPGRNPKTGEDIPITARRVVTFRPGQKLKSRVESATPKE</sequence>
<accession>Q1CIH0</accession>
<accession>C4GTI4</accession>
<gene>
    <name evidence="1" type="primary">ihfA</name>
    <name evidence="1" type="synonym">himA</name>
    <name type="ordered locus">YPN_1881</name>
    <name type="ORF">YP516_2092</name>
</gene>
<feature type="chain" id="PRO_0000277793" description="Integration host factor subunit alpha">
    <location>
        <begin position="1"/>
        <end position="98"/>
    </location>
</feature>
<feature type="region of interest" description="Disordered" evidence="2">
    <location>
        <begin position="49"/>
        <end position="70"/>
    </location>
</feature>
<evidence type="ECO:0000255" key="1">
    <source>
        <dbReference type="HAMAP-Rule" id="MF_00380"/>
    </source>
</evidence>
<evidence type="ECO:0000256" key="2">
    <source>
        <dbReference type="SAM" id="MobiDB-lite"/>
    </source>
</evidence>
<organism>
    <name type="scientific">Yersinia pestis bv. Antiqua (strain Nepal516)</name>
    <dbReference type="NCBI Taxonomy" id="377628"/>
    <lineage>
        <taxon>Bacteria</taxon>
        <taxon>Pseudomonadati</taxon>
        <taxon>Pseudomonadota</taxon>
        <taxon>Gammaproteobacteria</taxon>
        <taxon>Enterobacterales</taxon>
        <taxon>Yersiniaceae</taxon>
        <taxon>Yersinia</taxon>
    </lineage>
</organism>
<comment type="function">
    <text evidence="1">This protein is one of the two subunits of integration host factor, a specific DNA-binding protein that functions in genetic recombination as well as in transcriptional and translational control.</text>
</comment>
<comment type="subunit">
    <text evidence="1">Heterodimer of an alpha and a beta chain.</text>
</comment>
<comment type="similarity">
    <text evidence="1">Belongs to the bacterial histone-like protein family.</text>
</comment>
<proteinExistence type="inferred from homology"/>
<reference key="1">
    <citation type="journal article" date="2006" name="J. Bacteriol.">
        <title>Complete genome sequence of Yersinia pestis strains Antiqua and Nepal516: evidence of gene reduction in an emerging pathogen.</title>
        <authorList>
            <person name="Chain P.S.G."/>
            <person name="Hu P."/>
            <person name="Malfatti S.A."/>
            <person name="Radnedge L."/>
            <person name="Larimer F."/>
            <person name="Vergez L.M."/>
            <person name="Worsham P."/>
            <person name="Chu M.C."/>
            <person name="Andersen G.L."/>
        </authorList>
    </citation>
    <scope>NUCLEOTIDE SEQUENCE [LARGE SCALE GENOMIC DNA]</scope>
    <source>
        <strain>Nepal516</strain>
    </source>
</reference>
<reference key="2">
    <citation type="submission" date="2009-04" db="EMBL/GenBank/DDBJ databases">
        <title>Yersinia pestis Nepal516A whole genome shotgun sequencing project.</title>
        <authorList>
            <person name="Plunkett G. III"/>
            <person name="Anderson B.D."/>
            <person name="Baumler D.J."/>
            <person name="Burland V."/>
            <person name="Cabot E.L."/>
            <person name="Glasner J.D."/>
            <person name="Mau B."/>
            <person name="Neeno-Eckwall E."/>
            <person name="Perna N.T."/>
            <person name="Munk A.C."/>
            <person name="Tapia R."/>
            <person name="Green L.D."/>
            <person name="Rogers Y.C."/>
            <person name="Detter J.C."/>
            <person name="Bruce D.C."/>
            <person name="Brettin T.S."/>
        </authorList>
    </citation>
    <scope>NUCLEOTIDE SEQUENCE [LARGE SCALE GENOMIC DNA]</scope>
    <source>
        <strain>Nepal516</strain>
    </source>
</reference>
<keyword id="KW-0233">DNA recombination</keyword>
<keyword id="KW-0238">DNA-binding</keyword>
<keyword id="KW-0804">Transcription</keyword>
<keyword id="KW-0805">Transcription regulation</keyword>
<keyword id="KW-0810">Translation regulation</keyword>
<protein>
    <recommendedName>
        <fullName evidence="1">Integration host factor subunit alpha</fullName>
        <shortName evidence="1">IHF-alpha</shortName>
    </recommendedName>
</protein>
<name>IHFA_YERPN</name>
<dbReference type="EMBL" id="CP000305">
    <property type="protein sequence ID" value="ABG18210.1"/>
    <property type="molecule type" value="Genomic_DNA"/>
</dbReference>
<dbReference type="EMBL" id="ACNQ01000010">
    <property type="protein sequence ID" value="EEO76785.1"/>
    <property type="molecule type" value="Genomic_DNA"/>
</dbReference>
<dbReference type="RefSeq" id="WP_002211830.1">
    <property type="nucleotide sequence ID" value="NZ_ACNQ01000010.1"/>
</dbReference>
<dbReference type="SMR" id="Q1CIH0"/>
<dbReference type="GeneID" id="97456078"/>
<dbReference type="KEGG" id="ypn:YPN_1881"/>
<dbReference type="HOGENOM" id="CLU_105066_1_3_6"/>
<dbReference type="Proteomes" id="UP000008936">
    <property type="component" value="Chromosome"/>
</dbReference>
<dbReference type="GO" id="GO:0005829">
    <property type="term" value="C:cytosol"/>
    <property type="evidence" value="ECO:0007669"/>
    <property type="project" value="TreeGrafter"/>
</dbReference>
<dbReference type="GO" id="GO:0003677">
    <property type="term" value="F:DNA binding"/>
    <property type="evidence" value="ECO:0007669"/>
    <property type="project" value="UniProtKB-UniRule"/>
</dbReference>
<dbReference type="GO" id="GO:0030527">
    <property type="term" value="F:structural constituent of chromatin"/>
    <property type="evidence" value="ECO:0007669"/>
    <property type="project" value="InterPro"/>
</dbReference>
<dbReference type="GO" id="GO:0006310">
    <property type="term" value="P:DNA recombination"/>
    <property type="evidence" value="ECO:0007669"/>
    <property type="project" value="UniProtKB-UniRule"/>
</dbReference>
<dbReference type="GO" id="GO:0009893">
    <property type="term" value="P:positive regulation of metabolic process"/>
    <property type="evidence" value="ECO:0007669"/>
    <property type="project" value="UniProtKB-ARBA"/>
</dbReference>
<dbReference type="GO" id="GO:0006355">
    <property type="term" value="P:regulation of DNA-templated transcription"/>
    <property type="evidence" value="ECO:0007669"/>
    <property type="project" value="UniProtKB-UniRule"/>
</dbReference>
<dbReference type="GO" id="GO:0006417">
    <property type="term" value="P:regulation of translation"/>
    <property type="evidence" value="ECO:0007669"/>
    <property type="project" value="UniProtKB-UniRule"/>
</dbReference>
<dbReference type="CDD" id="cd13835">
    <property type="entry name" value="IHF_A"/>
    <property type="match status" value="1"/>
</dbReference>
<dbReference type="FunFam" id="4.10.520.10:FF:000002">
    <property type="entry name" value="Integration host factor subunit alpha"/>
    <property type="match status" value="1"/>
</dbReference>
<dbReference type="Gene3D" id="4.10.520.10">
    <property type="entry name" value="IHF-like DNA-binding proteins"/>
    <property type="match status" value="1"/>
</dbReference>
<dbReference type="HAMAP" id="MF_00380">
    <property type="entry name" value="IHF_alpha"/>
    <property type="match status" value="1"/>
</dbReference>
<dbReference type="InterPro" id="IPR000119">
    <property type="entry name" value="Hist_DNA-bd"/>
</dbReference>
<dbReference type="InterPro" id="IPR020816">
    <property type="entry name" value="Histone-like_DNA-bd_CS"/>
</dbReference>
<dbReference type="InterPro" id="IPR010992">
    <property type="entry name" value="IHF-like_DNA-bd_dom_sf"/>
</dbReference>
<dbReference type="InterPro" id="IPR005684">
    <property type="entry name" value="IHF_alpha"/>
</dbReference>
<dbReference type="NCBIfam" id="TIGR00987">
    <property type="entry name" value="himA"/>
    <property type="match status" value="1"/>
</dbReference>
<dbReference type="NCBIfam" id="NF001401">
    <property type="entry name" value="PRK00285.1"/>
    <property type="match status" value="1"/>
</dbReference>
<dbReference type="PANTHER" id="PTHR33175">
    <property type="entry name" value="DNA-BINDING PROTEIN HU"/>
    <property type="match status" value="1"/>
</dbReference>
<dbReference type="PANTHER" id="PTHR33175:SF2">
    <property type="entry name" value="INTEGRATION HOST FACTOR SUBUNIT ALPHA"/>
    <property type="match status" value="1"/>
</dbReference>
<dbReference type="Pfam" id="PF00216">
    <property type="entry name" value="Bac_DNA_binding"/>
    <property type="match status" value="1"/>
</dbReference>
<dbReference type="PRINTS" id="PR01727">
    <property type="entry name" value="DNABINDINGHU"/>
</dbReference>
<dbReference type="SMART" id="SM00411">
    <property type="entry name" value="BHL"/>
    <property type="match status" value="1"/>
</dbReference>
<dbReference type="SUPFAM" id="SSF47729">
    <property type="entry name" value="IHF-like DNA-binding proteins"/>
    <property type="match status" value="1"/>
</dbReference>
<dbReference type="PROSITE" id="PS00045">
    <property type="entry name" value="HISTONE_LIKE"/>
    <property type="match status" value="1"/>
</dbReference>